<proteinExistence type="inferred from homology"/>
<reference key="1">
    <citation type="submission" date="2006-10" db="EMBL/GenBank/DDBJ databases">
        <title>Complete sequence of Methanosaeta thermophila PT.</title>
        <authorList>
            <consortium name="US DOE Joint Genome Institute"/>
            <person name="Copeland A."/>
            <person name="Lucas S."/>
            <person name="Lapidus A."/>
            <person name="Barry K."/>
            <person name="Detter J.C."/>
            <person name="Glavina del Rio T."/>
            <person name="Hammon N."/>
            <person name="Israni S."/>
            <person name="Pitluck S."/>
            <person name="Chain P."/>
            <person name="Malfatti S."/>
            <person name="Shin M."/>
            <person name="Vergez L."/>
            <person name="Schmutz J."/>
            <person name="Larimer F."/>
            <person name="Land M."/>
            <person name="Hauser L."/>
            <person name="Kyrpides N."/>
            <person name="Kim E."/>
            <person name="Smith K.S."/>
            <person name="Ingram-Smith C."/>
            <person name="Richardson P."/>
        </authorList>
    </citation>
    <scope>NUCLEOTIDE SEQUENCE [LARGE SCALE GENOMIC DNA]</scope>
    <source>
        <strain>DSM 6194 / JCM 14653 / NBRC 101360 / PT</strain>
    </source>
</reference>
<feature type="chain" id="PRO_1000000562" description="DNA primase DnaG">
    <location>
        <begin position="1"/>
        <end position="438"/>
    </location>
</feature>
<feature type="domain" description="Toprim" evidence="1">
    <location>
        <begin position="171"/>
        <end position="245"/>
    </location>
</feature>
<feature type="binding site" evidence="1">
    <location>
        <position position="177"/>
    </location>
    <ligand>
        <name>Mg(2+)</name>
        <dbReference type="ChEBI" id="CHEBI:18420"/>
        <label>1</label>
        <note>catalytic</note>
    </ligand>
</feature>
<feature type="binding site" evidence="1">
    <location>
        <position position="219"/>
    </location>
    <ligand>
        <name>Mg(2+)</name>
        <dbReference type="ChEBI" id="CHEBI:18420"/>
        <label>1</label>
        <note>catalytic</note>
    </ligand>
</feature>
<feature type="binding site" evidence="1">
    <location>
        <position position="219"/>
    </location>
    <ligand>
        <name>Mg(2+)</name>
        <dbReference type="ChEBI" id="CHEBI:18420"/>
        <label>2</label>
    </ligand>
</feature>
<feature type="binding site" evidence="1">
    <location>
        <position position="221"/>
    </location>
    <ligand>
        <name>Mg(2+)</name>
        <dbReference type="ChEBI" id="CHEBI:18420"/>
        <label>2</label>
    </ligand>
</feature>
<accession>A0B738</accession>
<protein>
    <recommendedName>
        <fullName evidence="1">DNA primase DnaG</fullName>
        <ecNumber evidence="1">2.7.7.101</ecNumber>
    </recommendedName>
</protein>
<sequence length="438" mass="48597">MQSVDTTKYIIYADITADGIVERPDVVGAIFGQTEGLLGSDLDLRDLQKTGRLGRIDVQISSSGGKSMGTISIPSSFDKVETAILAAALETIDRVGPCMARIHVTKIEDVRAAKRKYIIDRAKRILVEMFDENLLETEQITEEIKQSVRVEEITYIGKDNLPAGPNVLDSDAILVVEGRADVLNLLKYGIKNAVAVGGTNIPPTITELCSKKIATAFTDGDRGGELIVKELLQVADIDYVARAPEGKCVEELTQKEIIRALRQKIPVEQVMDMYKIKPFTRKKREIVTKRKSLIRERPVSVRTVAQVVPIAHHAEIAPPHEIQTRVHQKEVHEHYEEPEIEGQEPEEWFKHHVEELDGTLTARLFDRNNNPIRDVAVRDLARELKESNGSVHGVIFDGVITQRLLDIAAEKGLDYLIGAKMGSIAKTPVGIKVITSGQ</sequence>
<evidence type="ECO:0000255" key="1">
    <source>
        <dbReference type="HAMAP-Rule" id="MF_00007"/>
    </source>
</evidence>
<dbReference type="EC" id="2.7.7.101" evidence="1"/>
<dbReference type="EMBL" id="CP000477">
    <property type="protein sequence ID" value="ABK14512.1"/>
    <property type="molecule type" value="Genomic_DNA"/>
</dbReference>
<dbReference type="RefSeq" id="WP_011695908.1">
    <property type="nucleotide sequence ID" value="NC_008553.1"/>
</dbReference>
<dbReference type="SMR" id="A0B738"/>
<dbReference type="STRING" id="349307.Mthe_0722"/>
<dbReference type="GeneID" id="4461873"/>
<dbReference type="KEGG" id="mtp:Mthe_0722"/>
<dbReference type="HOGENOM" id="CLU_034626_0_0_2"/>
<dbReference type="OrthoDB" id="8643at2157"/>
<dbReference type="Proteomes" id="UP000000674">
    <property type="component" value="Chromosome"/>
</dbReference>
<dbReference type="GO" id="GO:0005737">
    <property type="term" value="C:cytoplasm"/>
    <property type="evidence" value="ECO:0007669"/>
    <property type="project" value="TreeGrafter"/>
</dbReference>
<dbReference type="GO" id="GO:0000428">
    <property type="term" value="C:DNA-directed RNA polymerase complex"/>
    <property type="evidence" value="ECO:0007669"/>
    <property type="project" value="UniProtKB-KW"/>
</dbReference>
<dbReference type="GO" id="GO:0000178">
    <property type="term" value="C:exosome (RNase complex)"/>
    <property type="evidence" value="ECO:0007669"/>
    <property type="project" value="UniProtKB-KW"/>
</dbReference>
<dbReference type="GO" id="GO:1990077">
    <property type="term" value="C:primosome complex"/>
    <property type="evidence" value="ECO:0007669"/>
    <property type="project" value="UniProtKB-KW"/>
</dbReference>
<dbReference type="GO" id="GO:0003899">
    <property type="term" value="F:DNA-directed RNA polymerase activity"/>
    <property type="evidence" value="ECO:0007669"/>
    <property type="project" value="InterPro"/>
</dbReference>
<dbReference type="GO" id="GO:0046872">
    <property type="term" value="F:metal ion binding"/>
    <property type="evidence" value="ECO:0007669"/>
    <property type="project" value="UniProtKB-KW"/>
</dbReference>
<dbReference type="GO" id="GO:0008143">
    <property type="term" value="F:poly(A) binding"/>
    <property type="evidence" value="ECO:0007669"/>
    <property type="project" value="InterPro"/>
</dbReference>
<dbReference type="GO" id="GO:0006269">
    <property type="term" value="P:DNA replication, synthesis of primer"/>
    <property type="evidence" value="ECO:0007669"/>
    <property type="project" value="UniProtKB-UniRule"/>
</dbReference>
<dbReference type="CDD" id="cd01029">
    <property type="entry name" value="TOPRIM_primases"/>
    <property type="match status" value="1"/>
</dbReference>
<dbReference type="FunFam" id="3.40.1360.10:FF:000010">
    <property type="entry name" value="DNA primase DnaG"/>
    <property type="match status" value="1"/>
</dbReference>
<dbReference type="Gene3D" id="3.40.1360.10">
    <property type="match status" value="1"/>
</dbReference>
<dbReference type="HAMAP" id="MF_00007">
    <property type="entry name" value="DNA_primase_DnaG_arc"/>
    <property type="match status" value="1"/>
</dbReference>
<dbReference type="InterPro" id="IPR050219">
    <property type="entry name" value="DnaG_primase"/>
</dbReference>
<dbReference type="InterPro" id="IPR020607">
    <property type="entry name" value="Primase_DnaG_arc"/>
</dbReference>
<dbReference type="InterPro" id="IPR034154">
    <property type="entry name" value="TOPRIM_DnaG/twinkle"/>
</dbReference>
<dbReference type="InterPro" id="IPR006171">
    <property type="entry name" value="TOPRIM_dom"/>
</dbReference>
<dbReference type="NCBIfam" id="NF003108">
    <property type="entry name" value="PRK04031.1-1"/>
    <property type="match status" value="1"/>
</dbReference>
<dbReference type="PANTHER" id="PTHR30313">
    <property type="entry name" value="DNA PRIMASE"/>
    <property type="match status" value="1"/>
</dbReference>
<dbReference type="PANTHER" id="PTHR30313:SF2">
    <property type="entry name" value="DNA PRIMASE"/>
    <property type="match status" value="1"/>
</dbReference>
<dbReference type="Pfam" id="PF13662">
    <property type="entry name" value="Toprim_4"/>
    <property type="match status" value="1"/>
</dbReference>
<dbReference type="SMART" id="SM00493">
    <property type="entry name" value="TOPRIM"/>
    <property type="match status" value="1"/>
</dbReference>
<dbReference type="SUPFAM" id="SSF56731">
    <property type="entry name" value="DNA primase core"/>
    <property type="match status" value="1"/>
</dbReference>
<dbReference type="PROSITE" id="PS50880">
    <property type="entry name" value="TOPRIM"/>
    <property type="match status" value="1"/>
</dbReference>
<comment type="function">
    <text evidence="1">RNA polymerase that catalyzes the synthesis of short RNA molecules used as primers for DNA polymerase during DNA replication. Also part of the exosome, which is a complex involved in RNA degradation. Acts as a poly(A)-binding protein that enhances the interaction between heteromeric, adenine-rich transcripts and the exosome.</text>
</comment>
<comment type="catalytic activity">
    <reaction evidence="1">
        <text>ssDNA + n NTP = ssDNA/pppN(pN)n-1 hybrid + (n-1) diphosphate.</text>
        <dbReference type="EC" id="2.7.7.101"/>
    </reaction>
</comment>
<comment type="cofactor">
    <cofactor evidence="1">
        <name>Mg(2+)</name>
        <dbReference type="ChEBI" id="CHEBI:18420"/>
    </cofactor>
    <text evidence="1">Binds two Mg(2+) per subunit.</text>
</comment>
<comment type="subunit">
    <text evidence="1">Forms a ternary complex with MCM helicase and DNA. Component of the archaeal exosome complex.</text>
</comment>
<comment type="similarity">
    <text evidence="1">Belongs to the archaeal DnaG primase family.</text>
</comment>
<name>DNAG_METTP</name>
<gene>
    <name evidence="1" type="primary">dnaG</name>
    <name type="ordered locus">Mthe_0722</name>
</gene>
<organism>
    <name type="scientific">Methanothrix thermoacetophila (strain DSM 6194 / JCM 14653 / NBRC 101360 / PT)</name>
    <name type="common">Methanosaeta thermophila</name>
    <dbReference type="NCBI Taxonomy" id="349307"/>
    <lineage>
        <taxon>Archaea</taxon>
        <taxon>Methanobacteriati</taxon>
        <taxon>Methanobacteriota</taxon>
        <taxon>Stenosarchaea group</taxon>
        <taxon>Methanomicrobia</taxon>
        <taxon>Methanotrichales</taxon>
        <taxon>Methanotrichaceae</taxon>
        <taxon>Methanothrix</taxon>
    </lineage>
</organism>
<keyword id="KW-0235">DNA replication</keyword>
<keyword id="KW-0240">DNA-directed RNA polymerase</keyword>
<keyword id="KW-0271">Exosome</keyword>
<keyword id="KW-0460">Magnesium</keyword>
<keyword id="KW-0479">Metal-binding</keyword>
<keyword id="KW-0548">Nucleotidyltransferase</keyword>
<keyword id="KW-0639">Primosome</keyword>
<keyword id="KW-1185">Reference proteome</keyword>
<keyword id="KW-0804">Transcription</keyword>
<keyword id="KW-0808">Transferase</keyword>